<organism>
    <name type="scientific">Lactobacillus johnsonii (strain CNCM I-12250 / La1 / NCC 533)</name>
    <dbReference type="NCBI Taxonomy" id="257314"/>
    <lineage>
        <taxon>Bacteria</taxon>
        <taxon>Bacillati</taxon>
        <taxon>Bacillota</taxon>
        <taxon>Bacilli</taxon>
        <taxon>Lactobacillales</taxon>
        <taxon>Lactobacillaceae</taxon>
        <taxon>Lactobacillus</taxon>
    </lineage>
</organism>
<reference key="1">
    <citation type="journal article" date="2004" name="Proc. Natl. Acad. Sci. U.S.A.">
        <title>The genome sequence of the probiotic intestinal bacterium Lactobacillus johnsonii NCC 533.</title>
        <authorList>
            <person name="Pridmore R.D."/>
            <person name="Berger B."/>
            <person name="Desiere F."/>
            <person name="Vilanova D."/>
            <person name="Barretto C."/>
            <person name="Pittet A.-C."/>
            <person name="Zwahlen M.-C."/>
            <person name="Rouvet M."/>
            <person name="Altermann E."/>
            <person name="Barrangou R."/>
            <person name="Mollet B."/>
            <person name="Mercenier A."/>
            <person name="Klaenhammer T."/>
            <person name="Arigoni F."/>
            <person name="Schell M.A."/>
        </authorList>
    </citation>
    <scope>NUCLEOTIDE SEQUENCE [LARGE SCALE GENOMIC DNA]</scope>
    <source>
        <strain>CNCM I-1225 / La1 / NCC 533</strain>
    </source>
</reference>
<sequence>MSKVVHFDASKLTPFVHENELKEMQAMVTAADQELREGTGAGSDFRGWIDLPINYDKDEFDRIKKAAKKIQNDSEVLVGIGIGGSYLGAQASIEFLNSSFYGREKEKYPTVVFCGNSLSGSYLYDLLEWLGDKDFSINIISKSGTTTEPSIAFRVLKDKLIKKYGKEEAAKRIYATTDRAKGALKTEADAEGYEEFVVPDDIGGRFSVLSAVGLLPIAVAGGDIDAMMKGAADARAAYTDPDVLKDSPYQYAAMRNILYRKGYTTELLENYEPSLRMFGEWWKQLMGESEGKDQKGIYPSSANFTTDLHSLGQYIQEGRRNLMETVIRVEHPTHDVTIPDDKENLDQLNFLSGKTMNYVNDRAYEGVVLAHTDGGVPVMTVDIENQTAHTLGYLIYWFELAVGISGYLNGINPFNQPGVESYKRNMFGLLNKPGYEDLHDDLTKRLK</sequence>
<dbReference type="EC" id="5.3.1.9" evidence="1"/>
<dbReference type="EMBL" id="AE017198">
    <property type="protein sequence ID" value="AAS08745.1"/>
    <property type="molecule type" value="Genomic_DNA"/>
</dbReference>
<dbReference type="RefSeq" id="WP_004897655.1">
    <property type="nucleotide sequence ID" value="NC_005362.1"/>
</dbReference>
<dbReference type="SMR" id="Q74K31"/>
<dbReference type="KEGG" id="ljo:LJ_0924"/>
<dbReference type="eggNOG" id="COG0166">
    <property type="taxonomic scope" value="Bacteria"/>
</dbReference>
<dbReference type="HOGENOM" id="CLU_037303_0_1_9"/>
<dbReference type="UniPathway" id="UPA00109">
    <property type="reaction ID" value="UER00181"/>
</dbReference>
<dbReference type="UniPathway" id="UPA00138"/>
<dbReference type="Proteomes" id="UP000000581">
    <property type="component" value="Chromosome"/>
</dbReference>
<dbReference type="GO" id="GO:0005829">
    <property type="term" value="C:cytosol"/>
    <property type="evidence" value="ECO:0007669"/>
    <property type="project" value="TreeGrafter"/>
</dbReference>
<dbReference type="GO" id="GO:0097367">
    <property type="term" value="F:carbohydrate derivative binding"/>
    <property type="evidence" value="ECO:0007669"/>
    <property type="project" value="InterPro"/>
</dbReference>
<dbReference type="GO" id="GO:0004347">
    <property type="term" value="F:glucose-6-phosphate isomerase activity"/>
    <property type="evidence" value="ECO:0007669"/>
    <property type="project" value="UniProtKB-UniRule"/>
</dbReference>
<dbReference type="GO" id="GO:0048029">
    <property type="term" value="F:monosaccharide binding"/>
    <property type="evidence" value="ECO:0007669"/>
    <property type="project" value="TreeGrafter"/>
</dbReference>
<dbReference type="GO" id="GO:0006094">
    <property type="term" value="P:gluconeogenesis"/>
    <property type="evidence" value="ECO:0007669"/>
    <property type="project" value="UniProtKB-UniRule"/>
</dbReference>
<dbReference type="GO" id="GO:0051156">
    <property type="term" value="P:glucose 6-phosphate metabolic process"/>
    <property type="evidence" value="ECO:0007669"/>
    <property type="project" value="TreeGrafter"/>
</dbReference>
<dbReference type="GO" id="GO:0006096">
    <property type="term" value="P:glycolytic process"/>
    <property type="evidence" value="ECO:0007669"/>
    <property type="project" value="UniProtKB-UniRule"/>
</dbReference>
<dbReference type="CDD" id="cd05015">
    <property type="entry name" value="SIS_PGI_1"/>
    <property type="match status" value="1"/>
</dbReference>
<dbReference type="CDD" id="cd05016">
    <property type="entry name" value="SIS_PGI_2"/>
    <property type="match status" value="1"/>
</dbReference>
<dbReference type="FunFam" id="3.40.50.10490:FF:000015">
    <property type="entry name" value="Glucose-6-phosphate isomerase"/>
    <property type="match status" value="1"/>
</dbReference>
<dbReference type="FunFam" id="3.40.50.10490:FF:000016">
    <property type="entry name" value="Glucose-6-phosphate isomerase"/>
    <property type="match status" value="1"/>
</dbReference>
<dbReference type="Gene3D" id="3.40.50.10490">
    <property type="entry name" value="Glucose-6-phosphate isomerase like protein, domain 1"/>
    <property type="match status" value="3"/>
</dbReference>
<dbReference type="HAMAP" id="MF_00473">
    <property type="entry name" value="G6P_isomerase"/>
    <property type="match status" value="1"/>
</dbReference>
<dbReference type="InterPro" id="IPR001672">
    <property type="entry name" value="G6P_Isomerase"/>
</dbReference>
<dbReference type="InterPro" id="IPR018189">
    <property type="entry name" value="Phosphoglucose_isomerase_CS"/>
</dbReference>
<dbReference type="InterPro" id="IPR046348">
    <property type="entry name" value="SIS_dom_sf"/>
</dbReference>
<dbReference type="InterPro" id="IPR035476">
    <property type="entry name" value="SIS_PGI_1"/>
</dbReference>
<dbReference type="InterPro" id="IPR035482">
    <property type="entry name" value="SIS_PGI_2"/>
</dbReference>
<dbReference type="NCBIfam" id="NF010697">
    <property type="entry name" value="PRK14097.1"/>
    <property type="match status" value="1"/>
</dbReference>
<dbReference type="PANTHER" id="PTHR11469">
    <property type="entry name" value="GLUCOSE-6-PHOSPHATE ISOMERASE"/>
    <property type="match status" value="1"/>
</dbReference>
<dbReference type="PANTHER" id="PTHR11469:SF1">
    <property type="entry name" value="GLUCOSE-6-PHOSPHATE ISOMERASE"/>
    <property type="match status" value="1"/>
</dbReference>
<dbReference type="Pfam" id="PF00342">
    <property type="entry name" value="PGI"/>
    <property type="match status" value="1"/>
</dbReference>
<dbReference type="PRINTS" id="PR00662">
    <property type="entry name" value="G6PISOMERASE"/>
</dbReference>
<dbReference type="SUPFAM" id="SSF53697">
    <property type="entry name" value="SIS domain"/>
    <property type="match status" value="1"/>
</dbReference>
<dbReference type="PROSITE" id="PS00765">
    <property type="entry name" value="P_GLUCOSE_ISOMERASE_1"/>
    <property type="match status" value="1"/>
</dbReference>
<dbReference type="PROSITE" id="PS00174">
    <property type="entry name" value="P_GLUCOSE_ISOMERASE_2"/>
    <property type="match status" value="1"/>
</dbReference>
<dbReference type="PROSITE" id="PS51463">
    <property type="entry name" value="P_GLUCOSE_ISOMERASE_3"/>
    <property type="match status" value="1"/>
</dbReference>
<gene>
    <name evidence="1" type="primary">pgi</name>
    <name type="ordered locus">LJ_0924</name>
</gene>
<proteinExistence type="inferred from homology"/>
<keyword id="KW-0963">Cytoplasm</keyword>
<keyword id="KW-0312">Gluconeogenesis</keyword>
<keyword id="KW-0324">Glycolysis</keyword>
<keyword id="KW-0413">Isomerase</keyword>
<comment type="function">
    <text evidence="1">Catalyzes the reversible isomerization of glucose-6-phosphate to fructose-6-phosphate.</text>
</comment>
<comment type="catalytic activity">
    <reaction evidence="1">
        <text>alpha-D-glucose 6-phosphate = beta-D-fructose 6-phosphate</text>
        <dbReference type="Rhea" id="RHEA:11816"/>
        <dbReference type="ChEBI" id="CHEBI:57634"/>
        <dbReference type="ChEBI" id="CHEBI:58225"/>
        <dbReference type="EC" id="5.3.1.9"/>
    </reaction>
</comment>
<comment type="pathway">
    <text evidence="1">Carbohydrate biosynthesis; gluconeogenesis.</text>
</comment>
<comment type="pathway">
    <text evidence="1">Carbohydrate degradation; glycolysis; D-glyceraldehyde 3-phosphate and glycerone phosphate from D-glucose: step 2/4.</text>
</comment>
<comment type="subcellular location">
    <subcellularLocation>
        <location evidence="1">Cytoplasm</location>
    </subcellularLocation>
</comment>
<comment type="similarity">
    <text evidence="1">Belongs to the GPI family.</text>
</comment>
<name>G6PI_LACJO</name>
<feature type="chain" id="PRO_0000180658" description="Glucose-6-phosphate isomerase">
    <location>
        <begin position="1"/>
        <end position="447"/>
    </location>
</feature>
<feature type="active site" description="Proton donor" evidence="1">
    <location>
        <position position="288"/>
    </location>
</feature>
<feature type="active site" evidence="1">
    <location>
        <position position="309"/>
    </location>
</feature>
<feature type="active site" evidence="1">
    <location>
        <position position="423"/>
    </location>
</feature>
<evidence type="ECO:0000255" key="1">
    <source>
        <dbReference type="HAMAP-Rule" id="MF_00473"/>
    </source>
</evidence>
<protein>
    <recommendedName>
        <fullName evidence="1">Glucose-6-phosphate isomerase</fullName>
        <shortName evidence="1">GPI</shortName>
        <ecNumber evidence="1">5.3.1.9</ecNumber>
    </recommendedName>
    <alternativeName>
        <fullName evidence="1">Phosphoglucose isomerase</fullName>
        <shortName evidence="1">PGI</shortName>
    </alternativeName>
    <alternativeName>
        <fullName evidence="1">Phosphohexose isomerase</fullName>
        <shortName evidence="1">PHI</shortName>
    </alternativeName>
</protein>
<accession>Q74K31</accession>